<comment type="subcellular location">
    <subcellularLocation>
        <location evidence="1">Cell inner membrane</location>
        <topology evidence="1">Multi-pass membrane protein</topology>
    </subcellularLocation>
</comment>
<comment type="similarity">
    <text evidence="3">Belongs to the amino acid/polyamine transporter 2 family. SdaC/TdcC subfamily.</text>
</comment>
<name>YQEG_ECO57</name>
<protein>
    <recommendedName>
        <fullName>Inner membrane transport protein YqeG</fullName>
    </recommendedName>
</protein>
<accession>P63342</accession>
<accession>Q46940</accession>
<feature type="chain" id="PRO_0000093816" description="Inner membrane transport protein YqeG">
    <location>
        <begin position="1"/>
        <end position="409"/>
    </location>
</feature>
<feature type="topological domain" description="Periplasmic" evidence="2">
    <location>
        <begin position="1"/>
        <end position="25"/>
    </location>
</feature>
<feature type="transmembrane region" description="Helical" evidence="2">
    <location>
        <begin position="26"/>
        <end position="46"/>
    </location>
</feature>
<feature type="topological domain" description="Cytoplasmic" evidence="2">
    <location>
        <begin position="47"/>
        <end position="87"/>
    </location>
</feature>
<feature type="transmembrane region" description="Helical" evidence="2">
    <location>
        <begin position="88"/>
        <end position="108"/>
    </location>
</feature>
<feature type="topological domain" description="Periplasmic" evidence="2">
    <location>
        <begin position="109"/>
        <end position="127"/>
    </location>
</feature>
<feature type="transmembrane region" description="Helical" evidence="2">
    <location>
        <begin position="128"/>
        <end position="148"/>
    </location>
</feature>
<feature type="topological domain" description="Cytoplasmic" evidence="2">
    <location>
        <begin position="149"/>
        <end position="151"/>
    </location>
</feature>
<feature type="transmembrane region" description="Helical" evidence="2">
    <location>
        <begin position="152"/>
        <end position="172"/>
    </location>
</feature>
<feature type="topological domain" description="Periplasmic" evidence="2">
    <location>
        <begin position="173"/>
        <end position="193"/>
    </location>
</feature>
<feature type="transmembrane region" description="Helical" evidence="2">
    <location>
        <begin position="194"/>
        <end position="214"/>
    </location>
</feature>
<feature type="topological domain" description="Cytoplasmic" evidence="2">
    <location>
        <begin position="215"/>
        <end position="235"/>
    </location>
</feature>
<feature type="transmembrane region" description="Helical" evidence="2">
    <location>
        <begin position="236"/>
        <end position="256"/>
    </location>
</feature>
<feature type="topological domain" description="Periplasmic" evidence="2">
    <location>
        <begin position="257"/>
        <end position="276"/>
    </location>
</feature>
<feature type="transmembrane region" description="Helical" evidence="2">
    <location>
        <begin position="277"/>
        <end position="297"/>
    </location>
</feature>
<feature type="topological domain" description="Cytoplasmic" evidence="2">
    <location>
        <begin position="298"/>
        <end position="329"/>
    </location>
</feature>
<feature type="transmembrane region" description="Helical" evidence="2">
    <location>
        <begin position="330"/>
        <end position="350"/>
    </location>
</feature>
<feature type="topological domain" description="Periplasmic" evidence="2">
    <location>
        <begin position="351"/>
        <end position="353"/>
    </location>
</feature>
<feature type="transmembrane region" description="Helical" evidence="2">
    <location>
        <begin position="354"/>
        <end position="374"/>
    </location>
</feature>
<feature type="topological domain" description="Cytoplasmic" evidence="2">
    <location>
        <begin position="375"/>
        <end position="388"/>
    </location>
</feature>
<feature type="transmembrane region" description="Helical" evidence="2">
    <location>
        <begin position="389"/>
        <end position="409"/>
    </location>
</feature>
<proteinExistence type="inferred from homology"/>
<keyword id="KW-0997">Cell inner membrane</keyword>
<keyword id="KW-1003">Cell membrane</keyword>
<keyword id="KW-0472">Membrane</keyword>
<keyword id="KW-1185">Reference proteome</keyword>
<keyword id="KW-0812">Transmembrane</keyword>
<keyword id="KW-1133">Transmembrane helix</keyword>
<keyword id="KW-0813">Transport</keyword>
<evidence type="ECO:0000250" key="1"/>
<evidence type="ECO:0000255" key="2"/>
<evidence type="ECO:0000305" key="3"/>
<gene>
    <name type="primary">yqeG</name>
    <name type="ordered locus">Z4165</name>
    <name type="ordered locus">ECs3702</name>
</gene>
<reference key="1">
    <citation type="journal article" date="2001" name="Nature">
        <title>Genome sequence of enterohaemorrhagic Escherichia coli O157:H7.</title>
        <authorList>
            <person name="Perna N.T."/>
            <person name="Plunkett G. III"/>
            <person name="Burland V."/>
            <person name="Mau B."/>
            <person name="Glasner J.D."/>
            <person name="Rose D.J."/>
            <person name="Mayhew G.F."/>
            <person name="Evans P.S."/>
            <person name="Gregor J."/>
            <person name="Kirkpatrick H.A."/>
            <person name="Posfai G."/>
            <person name="Hackett J."/>
            <person name="Klink S."/>
            <person name="Boutin A."/>
            <person name="Shao Y."/>
            <person name="Miller L."/>
            <person name="Grotbeck E.J."/>
            <person name="Davis N.W."/>
            <person name="Lim A."/>
            <person name="Dimalanta E.T."/>
            <person name="Potamousis K."/>
            <person name="Apodaca J."/>
            <person name="Anantharaman T.S."/>
            <person name="Lin J."/>
            <person name="Yen G."/>
            <person name="Schwartz D.C."/>
            <person name="Welch R.A."/>
            <person name="Blattner F.R."/>
        </authorList>
    </citation>
    <scope>NUCLEOTIDE SEQUENCE [LARGE SCALE GENOMIC DNA]</scope>
    <source>
        <strain>O157:H7 / EDL933 / ATCC 700927 / EHEC</strain>
    </source>
</reference>
<reference key="2">
    <citation type="journal article" date="2001" name="DNA Res.">
        <title>Complete genome sequence of enterohemorrhagic Escherichia coli O157:H7 and genomic comparison with a laboratory strain K-12.</title>
        <authorList>
            <person name="Hayashi T."/>
            <person name="Makino K."/>
            <person name="Ohnishi M."/>
            <person name="Kurokawa K."/>
            <person name="Ishii K."/>
            <person name="Yokoyama K."/>
            <person name="Han C.-G."/>
            <person name="Ohtsubo E."/>
            <person name="Nakayama K."/>
            <person name="Murata T."/>
            <person name="Tanaka M."/>
            <person name="Tobe T."/>
            <person name="Iida T."/>
            <person name="Takami H."/>
            <person name="Honda T."/>
            <person name="Sasakawa C."/>
            <person name="Ogasawara N."/>
            <person name="Yasunaga T."/>
            <person name="Kuhara S."/>
            <person name="Shiba T."/>
            <person name="Hattori M."/>
            <person name="Shinagawa H."/>
        </authorList>
    </citation>
    <scope>NUCLEOTIDE SEQUENCE [LARGE SCALE GENOMIC DNA]</scope>
    <source>
        <strain>O157:H7 / Sakai / RIMD 0509952 / EHEC</strain>
    </source>
</reference>
<dbReference type="EMBL" id="AE005174">
    <property type="protein sequence ID" value="AAG57957.1"/>
    <property type="molecule type" value="Genomic_DNA"/>
</dbReference>
<dbReference type="EMBL" id="BA000007">
    <property type="protein sequence ID" value="BAB37125.1"/>
    <property type="molecule type" value="Genomic_DNA"/>
</dbReference>
<dbReference type="PIR" id="A85937">
    <property type="entry name" value="A85937"/>
</dbReference>
<dbReference type="PIR" id="F91091">
    <property type="entry name" value="F91091"/>
</dbReference>
<dbReference type="RefSeq" id="NP_311729.1">
    <property type="nucleotide sequence ID" value="NC_002695.1"/>
</dbReference>
<dbReference type="RefSeq" id="WP_000065950.1">
    <property type="nucleotide sequence ID" value="NZ_VOAI01000003.1"/>
</dbReference>
<dbReference type="SMR" id="P63342"/>
<dbReference type="STRING" id="155864.Z4165"/>
<dbReference type="KEGG" id="ece:Z4165"/>
<dbReference type="KEGG" id="ecs:ECs_3702"/>
<dbReference type="PATRIC" id="fig|386585.9.peg.3869"/>
<dbReference type="eggNOG" id="COG0814">
    <property type="taxonomic scope" value="Bacteria"/>
</dbReference>
<dbReference type="HOGENOM" id="CLU_052043_1_1_6"/>
<dbReference type="OMA" id="TYWPHRA"/>
<dbReference type="Proteomes" id="UP000000558">
    <property type="component" value="Chromosome"/>
</dbReference>
<dbReference type="Proteomes" id="UP000002519">
    <property type="component" value="Chromosome"/>
</dbReference>
<dbReference type="GO" id="GO:0005886">
    <property type="term" value="C:plasma membrane"/>
    <property type="evidence" value="ECO:0007669"/>
    <property type="project" value="UniProtKB-SubCell"/>
</dbReference>
<dbReference type="GO" id="GO:0003333">
    <property type="term" value="P:amino acid transmembrane transport"/>
    <property type="evidence" value="ECO:0007669"/>
    <property type="project" value="InterPro"/>
</dbReference>
<dbReference type="FunFam" id="1.20.1740.10:FF:000028">
    <property type="entry name" value="Inner membrane transporter YqeG"/>
    <property type="match status" value="1"/>
</dbReference>
<dbReference type="Gene3D" id="1.20.1740.10">
    <property type="entry name" value="Amino acid/polyamine transporter I"/>
    <property type="match status" value="1"/>
</dbReference>
<dbReference type="InterPro" id="IPR018227">
    <property type="entry name" value="Amino_acid_transport_2"/>
</dbReference>
<dbReference type="PANTHER" id="PTHR35334:SF3">
    <property type="entry name" value="INNER MEMBRANE TRANSPORT PROTEIN YQEG"/>
    <property type="match status" value="1"/>
</dbReference>
<dbReference type="PANTHER" id="PTHR35334">
    <property type="entry name" value="SERINE TRANSPORTER"/>
    <property type="match status" value="1"/>
</dbReference>
<dbReference type="Pfam" id="PF03222">
    <property type="entry name" value="Trp_Tyr_perm"/>
    <property type="match status" value="1"/>
</dbReference>
<organism>
    <name type="scientific">Escherichia coli O157:H7</name>
    <dbReference type="NCBI Taxonomy" id="83334"/>
    <lineage>
        <taxon>Bacteria</taxon>
        <taxon>Pseudomonadati</taxon>
        <taxon>Pseudomonadota</taxon>
        <taxon>Gammaproteobacteria</taxon>
        <taxon>Enterobacterales</taxon>
        <taxon>Enterobacteriaceae</taxon>
        <taxon>Escherichia</taxon>
    </lineage>
</organism>
<sequence>MSNIWSKEETLWSFALYGTAVGAGTLFLPIQLGSAGAVVLFITALVAWPLTYWPHKALCQFILSSKTSAGEGITGAVTHYYGKKIGNLITTLYFIAFFVVVLIYAVAITNSLTEQLAKHMVIDLRIRMLVSLGVVLILNLIFLMGRHATIRVMGFLVFPLIAYFLFLSIYLVGSWQPDLLTTQVEFNQNTLHQIWISIPVMVFAFSHTPIISTFAIDRREKYGEHAMDKCKKIMKVAYLIICISVLFFVFSCLLSIPPSYIEAAKEEGVTILSALSMLPNAPAWLSISGIIVAVVAMSKSFLGTYFGVIEGATEVVKTTLQQVGVKKSRAFNRALSIMLVSLITFIVCCINPNAISMIYAISGPLIAMILFIMPTLSTYLIPALKPWRSIGNLITLIVGILCVSVMFFS</sequence>